<dbReference type="EC" id="2.7.8.13" evidence="1"/>
<dbReference type="EMBL" id="AP008937">
    <property type="protein sequence ID" value="BAG26908.1"/>
    <property type="molecule type" value="Genomic_DNA"/>
</dbReference>
<dbReference type="RefSeq" id="WP_012390997.1">
    <property type="nucleotide sequence ID" value="NC_010610.1"/>
</dbReference>
<dbReference type="SMR" id="B2GB76"/>
<dbReference type="KEGG" id="lfe:LAF_0572"/>
<dbReference type="eggNOG" id="COG0472">
    <property type="taxonomic scope" value="Bacteria"/>
</dbReference>
<dbReference type="HOGENOM" id="CLU_023982_0_1_9"/>
<dbReference type="UniPathway" id="UPA00219"/>
<dbReference type="Proteomes" id="UP000001697">
    <property type="component" value="Chromosome"/>
</dbReference>
<dbReference type="GO" id="GO:0005886">
    <property type="term" value="C:plasma membrane"/>
    <property type="evidence" value="ECO:0007669"/>
    <property type="project" value="UniProtKB-SubCell"/>
</dbReference>
<dbReference type="GO" id="GO:0046872">
    <property type="term" value="F:metal ion binding"/>
    <property type="evidence" value="ECO:0007669"/>
    <property type="project" value="UniProtKB-KW"/>
</dbReference>
<dbReference type="GO" id="GO:0008963">
    <property type="term" value="F:phospho-N-acetylmuramoyl-pentapeptide-transferase activity"/>
    <property type="evidence" value="ECO:0007669"/>
    <property type="project" value="UniProtKB-UniRule"/>
</dbReference>
<dbReference type="GO" id="GO:0051301">
    <property type="term" value="P:cell division"/>
    <property type="evidence" value="ECO:0007669"/>
    <property type="project" value="UniProtKB-KW"/>
</dbReference>
<dbReference type="GO" id="GO:0071555">
    <property type="term" value="P:cell wall organization"/>
    <property type="evidence" value="ECO:0007669"/>
    <property type="project" value="UniProtKB-KW"/>
</dbReference>
<dbReference type="GO" id="GO:0009252">
    <property type="term" value="P:peptidoglycan biosynthetic process"/>
    <property type="evidence" value="ECO:0007669"/>
    <property type="project" value="UniProtKB-UniRule"/>
</dbReference>
<dbReference type="GO" id="GO:0008360">
    <property type="term" value="P:regulation of cell shape"/>
    <property type="evidence" value="ECO:0007669"/>
    <property type="project" value="UniProtKB-KW"/>
</dbReference>
<dbReference type="CDD" id="cd06852">
    <property type="entry name" value="GT_MraY"/>
    <property type="match status" value="1"/>
</dbReference>
<dbReference type="HAMAP" id="MF_00038">
    <property type="entry name" value="MraY"/>
    <property type="match status" value="1"/>
</dbReference>
<dbReference type="InterPro" id="IPR000715">
    <property type="entry name" value="Glycosyl_transferase_4"/>
</dbReference>
<dbReference type="InterPro" id="IPR003524">
    <property type="entry name" value="PNAcMuramoyl-5peptid_Trfase"/>
</dbReference>
<dbReference type="InterPro" id="IPR018480">
    <property type="entry name" value="PNAcMuramoyl-5peptid_Trfase_CS"/>
</dbReference>
<dbReference type="NCBIfam" id="TIGR00445">
    <property type="entry name" value="mraY"/>
    <property type="match status" value="1"/>
</dbReference>
<dbReference type="PANTHER" id="PTHR22926">
    <property type="entry name" value="PHOSPHO-N-ACETYLMURAMOYL-PENTAPEPTIDE-TRANSFERASE"/>
    <property type="match status" value="1"/>
</dbReference>
<dbReference type="PANTHER" id="PTHR22926:SF5">
    <property type="entry name" value="PHOSPHO-N-ACETYLMURAMOYL-PENTAPEPTIDE-TRANSFERASE HOMOLOG"/>
    <property type="match status" value="1"/>
</dbReference>
<dbReference type="Pfam" id="PF00953">
    <property type="entry name" value="Glycos_transf_4"/>
    <property type="match status" value="1"/>
</dbReference>
<dbReference type="Pfam" id="PF10555">
    <property type="entry name" value="MraY_sig1"/>
    <property type="match status" value="1"/>
</dbReference>
<dbReference type="PROSITE" id="PS01347">
    <property type="entry name" value="MRAY_1"/>
    <property type="match status" value="1"/>
</dbReference>
<dbReference type="PROSITE" id="PS01348">
    <property type="entry name" value="MRAY_2"/>
    <property type="match status" value="1"/>
</dbReference>
<name>MRAY_LIMF3</name>
<accession>B2GB76</accession>
<feature type="chain" id="PRO_1000090636" description="Phospho-N-acetylmuramoyl-pentapeptide-transferase">
    <location>
        <begin position="1"/>
        <end position="319"/>
    </location>
</feature>
<feature type="transmembrane region" description="Helical" evidence="1">
    <location>
        <begin position="1"/>
        <end position="21"/>
    </location>
</feature>
<feature type="transmembrane region" description="Helical" evidence="1">
    <location>
        <begin position="53"/>
        <end position="73"/>
    </location>
</feature>
<feature type="transmembrane region" description="Helical" evidence="1">
    <location>
        <begin position="77"/>
        <end position="97"/>
    </location>
</feature>
<feature type="transmembrane region" description="Helical" evidence="1">
    <location>
        <begin position="117"/>
        <end position="137"/>
    </location>
</feature>
<feature type="transmembrane region" description="Helical" evidence="1">
    <location>
        <begin position="140"/>
        <end position="160"/>
    </location>
</feature>
<feature type="transmembrane region" description="Helical" evidence="1">
    <location>
        <begin position="172"/>
        <end position="192"/>
    </location>
</feature>
<feature type="transmembrane region" description="Helical" evidence="1">
    <location>
        <begin position="195"/>
        <end position="215"/>
    </location>
</feature>
<feature type="transmembrane region" description="Helical" evidence="1">
    <location>
        <begin position="221"/>
        <end position="241"/>
    </location>
</feature>
<feature type="transmembrane region" description="Helical" evidence="1">
    <location>
        <begin position="249"/>
        <end position="269"/>
    </location>
</feature>
<feature type="transmembrane region" description="Helical" evidence="1">
    <location>
        <begin position="298"/>
        <end position="318"/>
    </location>
</feature>
<evidence type="ECO:0000255" key="1">
    <source>
        <dbReference type="HAMAP-Rule" id="MF_00038"/>
    </source>
</evidence>
<reference key="1">
    <citation type="journal article" date="2008" name="DNA Res.">
        <title>Comparative genome analysis of Lactobacillus reuteri and Lactobacillus fermentum reveal a genomic island for reuterin and cobalamin production.</title>
        <authorList>
            <person name="Morita H."/>
            <person name="Toh H."/>
            <person name="Fukuda S."/>
            <person name="Horikawa H."/>
            <person name="Oshima K."/>
            <person name="Suzuki T."/>
            <person name="Murakami M."/>
            <person name="Hisamatsu S."/>
            <person name="Kato Y."/>
            <person name="Takizawa T."/>
            <person name="Fukuoka H."/>
            <person name="Yoshimura T."/>
            <person name="Itoh K."/>
            <person name="O'Sullivan D.J."/>
            <person name="McKay L.L."/>
            <person name="Ohno H."/>
            <person name="Kikuchi J."/>
            <person name="Masaoka T."/>
            <person name="Hattori M."/>
        </authorList>
    </citation>
    <scope>NUCLEOTIDE SEQUENCE [LARGE SCALE GENOMIC DNA]</scope>
    <source>
        <strain>NBRC 3956 / LMG 18251</strain>
    </source>
</reference>
<gene>
    <name evidence="1" type="primary">mraY</name>
    <name type="ordered locus">LAF_0572</name>
</gene>
<comment type="function">
    <text evidence="1">Catalyzes the initial step of the lipid cycle reactions in the biosynthesis of the cell wall peptidoglycan: transfers peptidoglycan precursor phospho-MurNAc-pentapeptide from UDP-MurNAc-pentapeptide onto the lipid carrier undecaprenyl phosphate, yielding undecaprenyl-pyrophosphoryl-MurNAc-pentapeptide, known as lipid I.</text>
</comment>
<comment type="catalytic activity">
    <reaction evidence="1">
        <text>UDP-N-acetyl-alpha-D-muramoyl-L-alanyl-gamma-D-glutamyl-L-lysyl-D-alanyl-D-alanine + di-trans,octa-cis-undecaprenyl phosphate = Mur2Ac(oyl-L-Ala-gamma-D-Glu-L-Lys-D-Ala-D-Ala)-di-trans,octa-cis-undecaprenyl diphosphate + UMP</text>
        <dbReference type="Rhea" id="RHEA:21920"/>
        <dbReference type="ChEBI" id="CHEBI:57865"/>
        <dbReference type="ChEBI" id="CHEBI:60032"/>
        <dbReference type="ChEBI" id="CHEBI:60392"/>
        <dbReference type="ChEBI" id="CHEBI:70758"/>
        <dbReference type="EC" id="2.7.8.13"/>
    </reaction>
</comment>
<comment type="cofactor">
    <cofactor evidence="1">
        <name>Mg(2+)</name>
        <dbReference type="ChEBI" id="CHEBI:18420"/>
    </cofactor>
</comment>
<comment type="pathway">
    <text evidence="1">Cell wall biogenesis; peptidoglycan biosynthesis.</text>
</comment>
<comment type="subcellular location">
    <subcellularLocation>
        <location evidence="1">Cell membrane</location>
        <topology evidence="1">Multi-pass membrane protein</topology>
    </subcellularLocation>
</comment>
<comment type="similarity">
    <text evidence="1">Belongs to the glycosyltransferase 4 family. MraY subfamily.</text>
</comment>
<organism>
    <name type="scientific">Limosilactobacillus fermentum (strain NBRC 3956 / LMG 18251)</name>
    <name type="common">Lactobacillus fermentum</name>
    <dbReference type="NCBI Taxonomy" id="334390"/>
    <lineage>
        <taxon>Bacteria</taxon>
        <taxon>Bacillati</taxon>
        <taxon>Bacillota</taxon>
        <taxon>Bacilli</taxon>
        <taxon>Lactobacillales</taxon>
        <taxon>Lactobacillaceae</taxon>
        <taxon>Limosilactobacillus</taxon>
    </lineage>
</organism>
<sequence>MSILVAGLTLVSAFLITFLLMPSLIRYFRAKKEGQQIREEGPTWHEKKAGTPTMGGLLFILSAALTCGWVGAWQGQLNGTLGALLFTLIAYGLIGMWDDSIKIFNHQNEGFKPWQKFLAQVVGAMVFAVIYQHEGFQMGFGLTDWGWFYALFIIFWMVGFSNAVNLTDGLDGLVTGLATISFAAYLVLALVQGQTEVALFCLAMIGTLLGFFPFNHKPAKIFMGDMGSLALGASLAAVALVLHHEWSLLIIGIVYVLETLSVILQVAYFRRTGKRLFKMTPIHHTFEMMGWSEWKIDGVFWLVGLIAGALTVATILFLG</sequence>
<proteinExistence type="inferred from homology"/>
<protein>
    <recommendedName>
        <fullName evidence="1">Phospho-N-acetylmuramoyl-pentapeptide-transferase</fullName>
        <ecNumber evidence="1">2.7.8.13</ecNumber>
    </recommendedName>
    <alternativeName>
        <fullName evidence="1">UDP-MurNAc-pentapeptide phosphotransferase</fullName>
    </alternativeName>
</protein>
<keyword id="KW-0131">Cell cycle</keyword>
<keyword id="KW-0132">Cell division</keyword>
<keyword id="KW-1003">Cell membrane</keyword>
<keyword id="KW-0133">Cell shape</keyword>
<keyword id="KW-0961">Cell wall biogenesis/degradation</keyword>
<keyword id="KW-0460">Magnesium</keyword>
<keyword id="KW-0472">Membrane</keyword>
<keyword id="KW-0479">Metal-binding</keyword>
<keyword id="KW-0573">Peptidoglycan synthesis</keyword>
<keyword id="KW-1185">Reference proteome</keyword>
<keyword id="KW-0808">Transferase</keyword>
<keyword id="KW-0812">Transmembrane</keyword>
<keyword id="KW-1133">Transmembrane helix</keyword>